<organism>
    <name type="scientific">Cupriavidus pinatubonensis (strain JMP 134 / LMG 1197)</name>
    <name type="common">Cupriavidus necator (strain JMP 134)</name>
    <dbReference type="NCBI Taxonomy" id="264198"/>
    <lineage>
        <taxon>Bacteria</taxon>
        <taxon>Pseudomonadati</taxon>
        <taxon>Pseudomonadota</taxon>
        <taxon>Betaproteobacteria</taxon>
        <taxon>Burkholderiales</taxon>
        <taxon>Burkholderiaceae</taxon>
        <taxon>Cupriavidus</taxon>
    </lineage>
</organism>
<evidence type="ECO:0000255" key="1">
    <source>
        <dbReference type="HAMAP-Rule" id="MF_00689"/>
    </source>
</evidence>
<reference key="1">
    <citation type="journal article" date="2010" name="PLoS ONE">
        <title>The complete multipartite genome sequence of Cupriavidus necator JMP134, a versatile pollutant degrader.</title>
        <authorList>
            <person name="Lykidis A."/>
            <person name="Perez-Pantoja D."/>
            <person name="Ledger T."/>
            <person name="Mavromatis K."/>
            <person name="Anderson I.J."/>
            <person name="Ivanova N.N."/>
            <person name="Hooper S.D."/>
            <person name="Lapidus A."/>
            <person name="Lucas S."/>
            <person name="Gonzalez B."/>
            <person name="Kyrpides N.C."/>
        </authorList>
    </citation>
    <scope>NUCLEOTIDE SEQUENCE [LARGE SCALE GENOMIC DNA]</scope>
    <source>
        <strain>JMP134 / LMG 1197</strain>
    </source>
</reference>
<proteinExistence type="inferred from homology"/>
<name>BPT_CUPPJ</name>
<sequence>MSKLKELPLSALQFYATAPYACSYLDGRMARSQVATPAHLINADVYSRLVRAGFRRSGIFTYRPYCDECHACTPCRVLVEQFEPDRSQRRAWRRHGHLQALVAPLTYVEEHYSLYLLYQSMRHAGGGMDQDSRDQYEQFLLQSRVNSRLVEFREPPGSPEAGKLRMVSMIDVLDDGLSSVYTFYDPLERNASYGTYNILWQIRQTRELGLPHLYLGYWIAESRKMAYKARFRPLQVLTGNQWQAFEDDGVSAATAAPPDEPGPVQE</sequence>
<keyword id="KW-0012">Acyltransferase</keyword>
<keyword id="KW-0963">Cytoplasm</keyword>
<keyword id="KW-0808">Transferase</keyword>
<comment type="function">
    <text evidence="1">Functions in the N-end rule pathway of protein degradation where it conjugates Leu from its aminoacyl-tRNA to the N-termini of proteins containing an N-terminal aspartate or glutamate.</text>
</comment>
<comment type="catalytic activity">
    <reaction evidence="1">
        <text>N-terminal L-glutamyl-[protein] + L-leucyl-tRNA(Leu) = N-terminal L-leucyl-L-glutamyl-[protein] + tRNA(Leu) + H(+)</text>
        <dbReference type="Rhea" id="RHEA:50412"/>
        <dbReference type="Rhea" id="RHEA-COMP:9613"/>
        <dbReference type="Rhea" id="RHEA-COMP:9622"/>
        <dbReference type="Rhea" id="RHEA-COMP:12664"/>
        <dbReference type="Rhea" id="RHEA-COMP:12668"/>
        <dbReference type="ChEBI" id="CHEBI:15378"/>
        <dbReference type="ChEBI" id="CHEBI:64721"/>
        <dbReference type="ChEBI" id="CHEBI:78442"/>
        <dbReference type="ChEBI" id="CHEBI:78494"/>
        <dbReference type="ChEBI" id="CHEBI:133041"/>
        <dbReference type="EC" id="2.3.2.29"/>
    </reaction>
</comment>
<comment type="catalytic activity">
    <reaction evidence="1">
        <text>N-terminal L-aspartyl-[protein] + L-leucyl-tRNA(Leu) = N-terminal L-leucyl-L-aspartyl-[protein] + tRNA(Leu) + H(+)</text>
        <dbReference type="Rhea" id="RHEA:50420"/>
        <dbReference type="Rhea" id="RHEA-COMP:9613"/>
        <dbReference type="Rhea" id="RHEA-COMP:9622"/>
        <dbReference type="Rhea" id="RHEA-COMP:12669"/>
        <dbReference type="Rhea" id="RHEA-COMP:12674"/>
        <dbReference type="ChEBI" id="CHEBI:15378"/>
        <dbReference type="ChEBI" id="CHEBI:64720"/>
        <dbReference type="ChEBI" id="CHEBI:78442"/>
        <dbReference type="ChEBI" id="CHEBI:78494"/>
        <dbReference type="ChEBI" id="CHEBI:133042"/>
        <dbReference type="EC" id="2.3.2.29"/>
    </reaction>
</comment>
<comment type="subcellular location">
    <subcellularLocation>
        <location evidence="1">Cytoplasm</location>
    </subcellularLocation>
</comment>
<comment type="similarity">
    <text evidence="1">Belongs to the R-transferase family. Bpt subfamily.</text>
</comment>
<protein>
    <recommendedName>
        <fullName evidence="1">Aspartate/glutamate leucyltransferase</fullName>
        <ecNumber evidence="1">2.3.2.29</ecNumber>
    </recommendedName>
</protein>
<accession>Q472J5</accession>
<dbReference type="EC" id="2.3.2.29" evidence="1"/>
<dbReference type="EMBL" id="CP000090">
    <property type="protein sequence ID" value="AAZ60688.1"/>
    <property type="molecule type" value="Genomic_DNA"/>
</dbReference>
<dbReference type="SMR" id="Q472J5"/>
<dbReference type="STRING" id="264198.Reut_A1318"/>
<dbReference type="KEGG" id="reu:Reut_A1318"/>
<dbReference type="eggNOG" id="COG2935">
    <property type="taxonomic scope" value="Bacteria"/>
</dbReference>
<dbReference type="HOGENOM" id="CLU_077607_0_0_4"/>
<dbReference type="OrthoDB" id="9782022at2"/>
<dbReference type="GO" id="GO:0005737">
    <property type="term" value="C:cytoplasm"/>
    <property type="evidence" value="ECO:0007669"/>
    <property type="project" value="UniProtKB-SubCell"/>
</dbReference>
<dbReference type="GO" id="GO:0004057">
    <property type="term" value="F:arginyl-tRNA--protein transferase activity"/>
    <property type="evidence" value="ECO:0007669"/>
    <property type="project" value="InterPro"/>
</dbReference>
<dbReference type="GO" id="GO:0008914">
    <property type="term" value="F:leucyl-tRNA--protein transferase activity"/>
    <property type="evidence" value="ECO:0007669"/>
    <property type="project" value="UniProtKB-UniRule"/>
</dbReference>
<dbReference type="GO" id="GO:0071596">
    <property type="term" value="P:ubiquitin-dependent protein catabolic process via the N-end rule pathway"/>
    <property type="evidence" value="ECO:0007669"/>
    <property type="project" value="InterPro"/>
</dbReference>
<dbReference type="HAMAP" id="MF_00689">
    <property type="entry name" value="Bpt"/>
    <property type="match status" value="1"/>
</dbReference>
<dbReference type="InterPro" id="IPR016181">
    <property type="entry name" value="Acyl_CoA_acyltransferase"/>
</dbReference>
<dbReference type="InterPro" id="IPR017138">
    <property type="entry name" value="Asp_Glu_LeuTrfase"/>
</dbReference>
<dbReference type="InterPro" id="IPR030700">
    <property type="entry name" value="N-end_Aminoacyl_Trfase"/>
</dbReference>
<dbReference type="InterPro" id="IPR007472">
    <property type="entry name" value="N-end_Aminoacyl_Trfase_C"/>
</dbReference>
<dbReference type="InterPro" id="IPR007471">
    <property type="entry name" value="N-end_Aminoacyl_Trfase_N"/>
</dbReference>
<dbReference type="NCBIfam" id="NF002341">
    <property type="entry name" value="PRK01305.1-1"/>
    <property type="match status" value="1"/>
</dbReference>
<dbReference type="NCBIfam" id="NF002342">
    <property type="entry name" value="PRK01305.1-3"/>
    <property type="match status" value="1"/>
</dbReference>
<dbReference type="NCBIfam" id="NF002346">
    <property type="entry name" value="PRK01305.2-3"/>
    <property type="match status" value="1"/>
</dbReference>
<dbReference type="PANTHER" id="PTHR21367">
    <property type="entry name" value="ARGININE-TRNA-PROTEIN TRANSFERASE 1"/>
    <property type="match status" value="1"/>
</dbReference>
<dbReference type="PANTHER" id="PTHR21367:SF1">
    <property type="entry name" value="ARGINYL-TRNA--PROTEIN TRANSFERASE 1"/>
    <property type="match status" value="1"/>
</dbReference>
<dbReference type="Pfam" id="PF04377">
    <property type="entry name" value="ATE_C"/>
    <property type="match status" value="1"/>
</dbReference>
<dbReference type="Pfam" id="PF04376">
    <property type="entry name" value="ATE_N"/>
    <property type="match status" value="1"/>
</dbReference>
<dbReference type="PIRSF" id="PIRSF037208">
    <property type="entry name" value="ATE_pro_prd"/>
    <property type="match status" value="1"/>
</dbReference>
<dbReference type="SUPFAM" id="SSF55729">
    <property type="entry name" value="Acyl-CoA N-acyltransferases (Nat)"/>
    <property type="match status" value="1"/>
</dbReference>
<feature type="chain" id="PRO_0000263205" description="Aspartate/glutamate leucyltransferase">
    <location>
        <begin position="1"/>
        <end position="266"/>
    </location>
</feature>
<gene>
    <name evidence="1" type="primary">bpt</name>
    <name type="ordered locus">Reut_A1318</name>
</gene>